<feature type="chain" id="PRO_0000208879" description="Lysozyme">
    <location>
        <begin position="1"/>
        <end position="121"/>
    </location>
</feature>
<feature type="domain" description="C-type lysozyme" evidence="1">
    <location>
        <begin position="1"/>
        <end position="121"/>
    </location>
</feature>
<feature type="active site" evidence="1">
    <location>
        <position position="32"/>
    </location>
</feature>
<feature type="active site" evidence="1">
    <location>
        <position position="50"/>
    </location>
</feature>
<feature type="disulfide bond" evidence="1">
    <location>
        <begin position="6"/>
        <end position="121"/>
    </location>
</feature>
<feature type="disulfide bond" evidence="1">
    <location>
        <begin position="27"/>
        <end position="110"/>
    </location>
</feature>
<feature type="disulfide bond" evidence="1">
    <location>
        <begin position="62"/>
        <end position="76"/>
    </location>
</feature>
<feature type="disulfide bond" evidence="1">
    <location>
        <begin position="72"/>
        <end position="90"/>
    </location>
</feature>
<sequence length="121" mass="14027">KTFTRCELVQALRRQGFDEAKLRDWVCLVENESRGRTDIVGKPNKNGSRDYGLFQINDKYWCSNTSKAGKDCNITCSQLLTDDITVASKCAKKVYKRHNFMAWYGWRNHCQNKPLPDISKC</sequence>
<accession>P82174</accession>
<evidence type="ECO:0000255" key="1">
    <source>
        <dbReference type="PROSITE-ProRule" id="PRU00680"/>
    </source>
</evidence>
<comment type="function">
    <text evidence="1">Lysozymes have primarily a bacteriolytic function; those in tissues and body fluids are associated with the monocyte-macrophage system and enhance the activity of immunoagents.</text>
</comment>
<comment type="catalytic activity">
    <reaction>
        <text>Hydrolysis of (1-&gt;4)-beta-linkages between N-acetylmuramic acid and N-acetyl-D-glucosamine residues in a peptidoglycan and between N-acetyl-D-glucosamine residues in chitodextrins.</text>
        <dbReference type="EC" id="3.2.1.17"/>
    </reaction>
</comment>
<comment type="similarity">
    <text evidence="1">Belongs to the glycosyl hydrolase 22 family.</text>
</comment>
<name>LYS_GALME</name>
<keyword id="KW-0929">Antimicrobial</keyword>
<keyword id="KW-0081">Bacteriolytic enzyme</keyword>
<keyword id="KW-0903">Direct protein sequencing</keyword>
<keyword id="KW-1015">Disulfide bond</keyword>
<keyword id="KW-0326">Glycosidase</keyword>
<keyword id="KW-0378">Hydrolase</keyword>
<keyword id="KW-1185">Reference proteome</keyword>
<reference key="1">
    <citation type="submission" date="2001-08" db="UniProtKB">
        <authorList>
            <person name="Weise C."/>
        </authorList>
    </citation>
    <scope>PROTEIN SEQUENCE</scope>
    <source>
        <tissue>Larval hemolymph</tissue>
    </source>
</reference>
<dbReference type="EC" id="3.2.1.17"/>
<dbReference type="SMR" id="P82174"/>
<dbReference type="FunCoup" id="P82174">
    <property type="interactions" value="74"/>
</dbReference>
<dbReference type="CAZy" id="GH22">
    <property type="family name" value="Glycoside Hydrolase Family 22"/>
</dbReference>
<dbReference type="EnsemblMetazoa" id="XM_026899456.2">
    <property type="protein sequence ID" value="XP_026755257.1"/>
    <property type="gene ID" value="LOC113515290"/>
</dbReference>
<dbReference type="InParanoid" id="P82174"/>
<dbReference type="OrthoDB" id="17373at2759"/>
<dbReference type="Proteomes" id="UP000504614">
    <property type="component" value="Unplaced"/>
</dbReference>
<dbReference type="GO" id="GO:0003796">
    <property type="term" value="F:lysozyme activity"/>
    <property type="evidence" value="ECO:0007669"/>
    <property type="project" value="UniProtKB-EC"/>
</dbReference>
<dbReference type="GO" id="GO:0042742">
    <property type="term" value="P:defense response to bacterium"/>
    <property type="evidence" value="ECO:0007669"/>
    <property type="project" value="UniProtKB-KW"/>
</dbReference>
<dbReference type="GO" id="GO:0031640">
    <property type="term" value="P:killing of cells of another organism"/>
    <property type="evidence" value="ECO:0007669"/>
    <property type="project" value="UniProtKB-KW"/>
</dbReference>
<dbReference type="CDD" id="cd16899">
    <property type="entry name" value="LYZ_C_invert"/>
    <property type="match status" value="1"/>
</dbReference>
<dbReference type="FunFam" id="1.10.530.10:FF:000001">
    <property type="entry name" value="Lysozyme C"/>
    <property type="match status" value="1"/>
</dbReference>
<dbReference type="Gene3D" id="1.10.530.10">
    <property type="match status" value="1"/>
</dbReference>
<dbReference type="InterPro" id="IPR001916">
    <property type="entry name" value="Glyco_hydro_22"/>
</dbReference>
<dbReference type="InterPro" id="IPR019799">
    <property type="entry name" value="Glyco_hydro_22_CS"/>
</dbReference>
<dbReference type="InterPro" id="IPR000974">
    <property type="entry name" value="Glyco_hydro_22_lys"/>
</dbReference>
<dbReference type="InterPro" id="IPR023346">
    <property type="entry name" value="Lysozyme-like_dom_sf"/>
</dbReference>
<dbReference type="PANTHER" id="PTHR11407">
    <property type="entry name" value="LYSOZYME C"/>
    <property type="match status" value="1"/>
</dbReference>
<dbReference type="PANTHER" id="PTHR11407:SF63">
    <property type="entry name" value="LYSOZYME C"/>
    <property type="match status" value="1"/>
</dbReference>
<dbReference type="Pfam" id="PF00062">
    <property type="entry name" value="Lys"/>
    <property type="match status" value="1"/>
</dbReference>
<dbReference type="PRINTS" id="PR00137">
    <property type="entry name" value="LYSOZYME"/>
</dbReference>
<dbReference type="PRINTS" id="PR00135">
    <property type="entry name" value="LYZLACT"/>
</dbReference>
<dbReference type="SMART" id="SM00263">
    <property type="entry name" value="LYZ1"/>
    <property type="match status" value="1"/>
</dbReference>
<dbReference type="SUPFAM" id="SSF53955">
    <property type="entry name" value="Lysozyme-like"/>
    <property type="match status" value="1"/>
</dbReference>
<dbReference type="PROSITE" id="PS00128">
    <property type="entry name" value="GLYCOSYL_HYDROL_F22_1"/>
    <property type="match status" value="1"/>
</dbReference>
<dbReference type="PROSITE" id="PS51348">
    <property type="entry name" value="GLYCOSYL_HYDROL_F22_2"/>
    <property type="match status" value="1"/>
</dbReference>
<protein>
    <recommendedName>
        <fullName>Lysozyme</fullName>
        <ecNumber>3.2.1.17</ecNumber>
    </recommendedName>
    <alternativeName>
        <fullName>1,4-beta-N-acetylmuramidase</fullName>
    </alternativeName>
</protein>
<organism>
    <name type="scientific">Galleria mellonella</name>
    <name type="common">Greater wax moth</name>
    <dbReference type="NCBI Taxonomy" id="7137"/>
    <lineage>
        <taxon>Eukaryota</taxon>
        <taxon>Metazoa</taxon>
        <taxon>Ecdysozoa</taxon>
        <taxon>Arthropoda</taxon>
        <taxon>Hexapoda</taxon>
        <taxon>Insecta</taxon>
        <taxon>Pterygota</taxon>
        <taxon>Neoptera</taxon>
        <taxon>Endopterygota</taxon>
        <taxon>Lepidoptera</taxon>
        <taxon>Glossata</taxon>
        <taxon>Ditrysia</taxon>
        <taxon>Pyraloidea</taxon>
        <taxon>Pyralidae</taxon>
        <taxon>Galleriinae</taxon>
        <taxon>Galleria</taxon>
    </lineage>
</organism>
<proteinExistence type="evidence at protein level"/>